<accession>Q00194</accession>
<proteinExistence type="evidence at protein level"/>
<organism>
    <name type="scientific">Bos taurus</name>
    <name type="common">Bovine</name>
    <dbReference type="NCBI Taxonomy" id="9913"/>
    <lineage>
        <taxon>Eukaryota</taxon>
        <taxon>Metazoa</taxon>
        <taxon>Chordata</taxon>
        <taxon>Craniata</taxon>
        <taxon>Vertebrata</taxon>
        <taxon>Euteleostomi</taxon>
        <taxon>Mammalia</taxon>
        <taxon>Eutheria</taxon>
        <taxon>Laurasiatheria</taxon>
        <taxon>Artiodactyla</taxon>
        <taxon>Ruminantia</taxon>
        <taxon>Pecora</taxon>
        <taxon>Bovidae</taxon>
        <taxon>Bovinae</taxon>
        <taxon>Bos</taxon>
    </lineage>
</organism>
<keyword id="KW-0002">3D-structure</keyword>
<keyword id="KW-0106">Calcium</keyword>
<keyword id="KW-0107">Calcium channel</keyword>
<keyword id="KW-0109">Calcium transport</keyword>
<keyword id="KW-0114">cAMP</keyword>
<keyword id="KW-0116">cAMP-binding</keyword>
<keyword id="KW-1003">Cell membrane</keyword>
<keyword id="KW-0140">cGMP</keyword>
<keyword id="KW-0142">cGMP-binding</keyword>
<keyword id="KW-0175">Coiled coil</keyword>
<keyword id="KW-0903">Direct protein sequencing</keyword>
<keyword id="KW-0325">Glycoprotein</keyword>
<keyword id="KW-0407">Ion channel</keyword>
<keyword id="KW-0406">Ion transport</keyword>
<keyword id="KW-1071">Ligand-gated ion channel</keyword>
<keyword id="KW-0472">Membrane</keyword>
<keyword id="KW-0547">Nucleotide-binding</keyword>
<keyword id="KW-1185">Reference proteome</keyword>
<keyword id="KW-0716">Sensory transduction</keyword>
<keyword id="KW-0915">Sodium</keyword>
<keyword id="KW-0894">Sodium channel</keyword>
<keyword id="KW-0739">Sodium transport</keyword>
<keyword id="KW-0812">Transmembrane</keyword>
<keyword id="KW-1133">Transmembrane helix</keyword>
<keyword id="KW-0813">Transport</keyword>
<keyword id="KW-0844">Vision</keyword>
<feature type="chain" id="PRO_0000219306" description="Cyclic nucleotide-gated channel alpha-1">
    <location>
        <begin position="1"/>
        <end position="690"/>
    </location>
</feature>
<feature type="topological domain" description="Cytoplasmic" evidence="12">
    <location>
        <begin position="1"/>
        <end position="163"/>
    </location>
</feature>
<feature type="transmembrane region" description="Helical; Name=S1" evidence="9 16">
    <location>
        <begin position="164"/>
        <end position="185"/>
    </location>
</feature>
<feature type="topological domain" description="Extracellular" evidence="12">
    <location>
        <begin position="186"/>
        <end position="195"/>
    </location>
</feature>
<feature type="transmembrane region" description="Helical; Name=S2" evidence="9 16">
    <location>
        <begin position="196"/>
        <end position="215"/>
    </location>
</feature>
<feature type="topological domain" description="Cytoplasmic" evidence="12">
    <location>
        <begin position="216"/>
        <end position="241"/>
    </location>
</feature>
<feature type="transmembrane region" description="Helical; Name=S3" evidence="9 16">
    <location>
        <begin position="242"/>
        <end position="251"/>
    </location>
</feature>
<feature type="topological domain" description="Extracellular" evidence="12">
    <location>
        <begin position="252"/>
        <end position="264"/>
    </location>
</feature>
<feature type="transmembrane region" description="Helical; Name=S4" evidence="9 16">
    <location>
        <begin position="265"/>
        <end position="283"/>
    </location>
</feature>
<feature type="topological domain" description="Cytoplasmic" evidence="12">
    <location>
        <begin position="284"/>
        <end position="291"/>
    </location>
</feature>
<feature type="transmembrane region" description="Helical; Name=S5" evidence="9 16">
    <location>
        <begin position="292"/>
        <end position="315"/>
    </location>
</feature>
<feature type="topological domain" description="Extracellular" evidence="12">
    <location>
        <begin position="316"/>
        <end position="342"/>
    </location>
</feature>
<feature type="transmembrane region" description="Helical; Name=P-helix" evidence="9 16">
    <location>
        <begin position="343"/>
        <end position="373"/>
    </location>
</feature>
<feature type="transmembrane region" description="Helical; Name=S6" evidence="9 16">
    <location>
        <begin position="374"/>
        <end position="399"/>
    </location>
</feature>
<feature type="topological domain" description="Cytoplasmic" evidence="12">
    <location>
        <begin position="400"/>
        <end position="690"/>
    </location>
</feature>
<feature type="region of interest" description="Disordered" evidence="2">
    <location>
        <begin position="33"/>
        <end position="76"/>
    </location>
</feature>
<feature type="region of interest" description="Disordered" evidence="2">
    <location>
        <begin position="88"/>
        <end position="151"/>
    </location>
</feature>
<feature type="region of interest" description="Ion conduction pathway" evidence="15">
    <location>
        <begin position="293"/>
        <end position="402"/>
    </location>
</feature>
<feature type="region of interest" description="Selectivity filter" evidence="13 14">
    <location>
        <begin position="360"/>
        <end position="363"/>
    </location>
</feature>
<feature type="region of interest" description="C-linker" evidence="13">
    <location>
        <begin position="403"/>
        <end position="479"/>
    </location>
</feature>
<feature type="region of interest" description="Cyclic nucleotide-binding domain (CNBD)" evidence="1 13 14 15">
    <location>
        <begin position="482"/>
        <end position="603"/>
    </location>
</feature>
<feature type="coiled-coil region" evidence="5">
    <location>
        <begin position="621"/>
        <end position="664"/>
    </location>
</feature>
<feature type="compositionally biased region" description="Acidic residues" evidence="2">
    <location>
        <begin position="40"/>
        <end position="54"/>
    </location>
</feature>
<feature type="compositionally biased region" description="Polar residues" evidence="2">
    <location>
        <begin position="64"/>
        <end position="76"/>
    </location>
</feature>
<feature type="compositionally biased region" description="Basic and acidic residues" evidence="2">
    <location>
        <begin position="111"/>
        <end position="151"/>
    </location>
</feature>
<feature type="binding site" evidence="1">
    <location>
        <position position="543"/>
    </location>
    <ligand>
        <name>3',5'-cyclic GMP</name>
        <dbReference type="ChEBI" id="CHEBI:57746"/>
    </ligand>
</feature>
<feature type="binding site" evidence="1">
    <location>
        <position position="546"/>
    </location>
    <ligand>
        <name>3',5'-cyclic GMP</name>
        <dbReference type="ChEBI" id="CHEBI:57746"/>
    </ligand>
</feature>
<feature type="binding site" evidence="1">
    <location>
        <position position="559"/>
    </location>
    <ligand>
        <name>3',5'-cyclic AMP</name>
        <dbReference type="ChEBI" id="CHEBI:58165"/>
    </ligand>
</feature>
<feature type="binding site" evidence="1">
    <location>
        <position position="559"/>
    </location>
    <ligand>
        <name>3',5'-cyclic GMP</name>
        <dbReference type="ChEBI" id="CHEBI:57746"/>
    </ligand>
</feature>
<feature type="binding site" evidence="1">
    <location>
        <position position="560"/>
    </location>
    <ligand>
        <name>3',5'-cyclic AMP</name>
        <dbReference type="ChEBI" id="CHEBI:58165"/>
    </ligand>
</feature>
<feature type="binding site" evidence="1">
    <location>
        <position position="560"/>
    </location>
    <ligand>
        <name>3',5'-cyclic GMP</name>
        <dbReference type="ChEBI" id="CHEBI:57746"/>
    </ligand>
</feature>
<feature type="site" description="Central gate" evidence="14">
    <location>
        <position position="387"/>
    </location>
</feature>
<feature type="site" description="Central gate" evidence="14">
    <location>
        <position position="391"/>
    </location>
</feature>
<feature type="glycosylation site" description="N-linked (GlcNAc...) asparagine" evidence="4">
    <location>
        <position position="327"/>
    </location>
</feature>
<feature type="mutagenesis site" description="Affects ionic permeation." evidence="7">
    <original>P</original>
    <variation>A</variation>
    <location>
        <position position="293"/>
    </location>
</feature>
<feature type="strand" evidence="19">
    <location>
        <begin position="158"/>
        <end position="160"/>
    </location>
</feature>
<feature type="helix" evidence="19">
    <location>
        <begin position="161"/>
        <end position="179"/>
    </location>
</feature>
<feature type="helix" evidence="19">
    <location>
        <begin position="182"/>
        <end position="186"/>
    </location>
</feature>
<feature type="helix" evidence="19">
    <location>
        <begin position="188"/>
        <end position="217"/>
    </location>
</feature>
<feature type="helix" evidence="19">
    <location>
        <begin position="233"/>
        <end position="240"/>
    </location>
</feature>
<feature type="strand" evidence="18">
    <location>
        <begin position="241"/>
        <end position="243"/>
    </location>
</feature>
<feature type="helix" evidence="19">
    <location>
        <begin position="245"/>
        <end position="248"/>
    </location>
</feature>
<feature type="turn" evidence="19">
    <location>
        <begin position="249"/>
        <end position="251"/>
    </location>
</feature>
<feature type="helix" evidence="19">
    <location>
        <begin position="256"/>
        <end position="260"/>
    </location>
</feature>
<feature type="helix" evidence="19">
    <location>
        <begin position="266"/>
        <end position="270"/>
    </location>
</feature>
<feature type="turn" evidence="19">
    <location>
        <begin position="274"/>
        <end position="276"/>
    </location>
</feature>
<feature type="helix" evidence="19">
    <location>
        <begin position="277"/>
        <end position="287"/>
    </location>
</feature>
<feature type="helix" evidence="19">
    <location>
        <begin position="293"/>
        <end position="322"/>
    </location>
</feature>
<feature type="strand" evidence="19">
    <location>
        <begin position="327"/>
        <end position="331"/>
    </location>
</feature>
<feature type="strand" evidence="19">
    <location>
        <begin position="335"/>
        <end position="337"/>
    </location>
</feature>
<feature type="turn" evidence="19">
    <location>
        <begin position="338"/>
        <end position="340"/>
    </location>
</feature>
<feature type="helix" evidence="19">
    <location>
        <begin position="343"/>
        <end position="359"/>
    </location>
</feature>
<feature type="strand" evidence="19">
    <location>
        <begin position="361"/>
        <end position="364"/>
    </location>
</feature>
<feature type="helix" evidence="19">
    <location>
        <begin position="370"/>
        <end position="401"/>
    </location>
</feature>
<feature type="helix" evidence="19">
    <location>
        <begin position="404"/>
        <end position="420"/>
    </location>
</feature>
<feature type="turn" evidence="19">
    <location>
        <begin position="421"/>
        <end position="423"/>
    </location>
</feature>
<feature type="helix" evidence="19">
    <location>
        <begin position="426"/>
        <end position="441"/>
    </location>
</feature>
<feature type="helix" evidence="19">
    <location>
        <begin position="448"/>
        <end position="451"/>
    </location>
</feature>
<feature type="strand" evidence="19">
    <location>
        <begin position="452"/>
        <end position="455"/>
    </location>
</feature>
<feature type="helix" evidence="19">
    <location>
        <begin position="457"/>
        <end position="467"/>
    </location>
</feature>
<feature type="helix" evidence="19">
    <location>
        <begin position="470"/>
        <end position="474"/>
    </location>
</feature>
<feature type="turn" evidence="19">
    <location>
        <begin position="477"/>
        <end position="480"/>
    </location>
</feature>
<feature type="helix" evidence="19">
    <location>
        <begin position="483"/>
        <end position="490"/>
    </location>
</feature>
<feature type="strand" evidence="19">
    <location>
        <begin position="494"/>
        <end position="496"/>
    </location>
</feature>
<feature type="strand" evidence="19">
    <location>
        <begin position="503"/>
        <end position="505"/>
    </location>
</feature>
<feature type="strand" evidence="19">
    <location>
        <begin position="513"/>
        <end position="519"/>
    </location>
</feature>
<feature type="strand" evidence="19">
    <location>
        <begin position="522"/>
        <end position="525"/>
    </location>
</feature>
<feature type="strand" evidence="18">
    <location>
        <begin position="526"/>
        <end position="529"/>
    </location>
</feature>
<feature type="strand" evidence="19">
    <location>
        <begin position="534"/>
        <end position="536"/>
    </location>
</feature>
<feature type="turn" evidence="19">
    <location>
        <begin position="554"/>
        <end position="557"/>
    </location>
</feature>
<feature type="strand" evidence="19">
    <location>
        <begin position="561"/>
        <end position="567"/>
    </location>
</feature>
<feature type="strand" evidence="19">
    <location>
        <begin position="571"/>
        <end position="575"/>
    </location>
</feature>
<feature type="helix" evidence="19">
    <location>
        <begin position="576"/>
        <end position="582"/>
    </location>
</feature>
<feature type="turn" evidence="19">
    <location>
        <begin position="583"/>
        <end position="585"/>
    </location>
</feature>
<feature type="helix" evidence="19">
    <location>
        <begin position="587"/>
        <end position="603"/>
    </location>
</feature>
<feature type="strand" evidence="19">
    <location>
        <begin position="604"/>
        <end position="606"/>
    </location>
</feature>
<feature type="helix" evidence="17">
    <location>
        <begin position="621"/>
        <end position="672"/>
    </location>
</feature>
<name>CNGA1_BOVIN</name>
<evidence type="ECO:0000250" key="1">
    <source>
        <dbReference type="UniProtKB" id="P29973"/>
    </source>
</evidence>
<evidence type="ECO:0000256" key="2">
    <source>
        <dbReference type="SAM" id="MobiDB-lite"/>
    </source>
</evidence>
<evidence type="ECO:0000269" key="3">
    <source>
    </source>
</evidence>
<evidence type="ECO:0000269" key="4">
    <source>
    </source>
</evidence>
<evidence type="ECO:0000269" key="5">
    <source>
    </source>
</evidence>
<evidence type="ECO:0000269" key="6">
    <source>
    </source>
</evidence>
<evidence type="ECO:0000269" key="7">
    <source>
    </source>
</evidence>
<evidence type="ECO:0000269" key="8">
    <source>
    </source>
</evidence>
<evidence type="ECO:0000269" key="9">
    <source>
    </source>
</evidence>
<evidence type="ECO:0000303" key="10">
    <source>
    </source>
</evidence>
<evidence type="ECO:0000303" key="11">
    <source>
    </source>
</evidence>
<evidence type="ECO:0000305" key="12"/>
<evidence type="ECO:0000305" key="13">
    <source>
    </source>
</evidence>
<evidence type="ECO:0000305" key="14">
    <source>
    </source>
</evidence>
<evidence type="ECO:0000305" key="15">
    <source>
    </source>
</evidence>
<evidence type="ECO:0007744" key="16">
    <source>
        <dbReference type="PDB" id="8BX7"/>
    </source>
</evidence>
<evidence type="ECO:0007829" key="17">
    <source>
        <dbReference type="PDB" id="3SWF"/>
    </source>
</evidence>
<evidence type="ECO:0007829" key="18">
    <source>
        <dbReference type="PDB" id="7O4H"/>
    </source>
</evidence>
<evidence type="ECO:0007829" key="19">
    <source>
        <dbReference type="PDB" id="8BX7"/>
    </source>
</evidence>
<reference key="1">
    <citation type="journal article" date="1989" name="Nature">
        <title>Primary structure and functional expression from complementary DNA of the rod photoreceptor cyclic GMP-gated channel.</title>
        <authorList>
            <person name="Kaupp U.B."/>
            <person name="Niidome T."/>
            <person name="Tanabe T."/>
            <person name="Terada S."/>
            <person name="Boenigk W."/>
            <person name="Stuehmer W."/>
            <person name="Cook N.J."/>
            <person name="Kangawa K."/>
            <person name="Matsuo H."/>
            <person name="Hirose T."/>
            <person name="Miyata T."/>
            <person name="Numa S."/>
        </authorList>
    </citation>
    <scope>NUCLEOTIDE SEQUENCE [MRNA]</scope>
    <scope>PROTEIN SEQUENCE OF 240-245; 261-269; 279-284; 406-411; 417-422; 435-443; 454-460; 513-518; 591-596; 628-637; 639-652 AND 663-677</scope>
    <scope>FUNCTION</scope>
    <scope>TRANSPORTER ACTIVITY</scope>
    <source>
        <tissue>Retinal rod cell</tissue>
    </source>
</reference>
<reference key="2">
    <citation type="journal article" date="2001" name="Science">
        <title>Nomenclature for ion channel subunits.</title>
        <authorList>
            <person name="Bradley J."/>
            <person name="Frings S."/>
            <person name="Yau K.W."/>
            <person name="Reed R."/>
        </authorList>
    </citation>
    <scope>NOMENCLATURE</scope>
</reference>
<reference key="3">
    <citation type="journal article" date="1992" name="Biochemistry">
        <title>Molecular model of the cyclic GMP-binding domain of the cyclic GMP-gated ion channel.</title>
        <authorList>
            <person name="Kumar V.D."/>
            <person name="Weber I.T."/>
        </authorList>
    </citation>
    <scope>3D-STRUCTURE MODELING OF 485-610</scope>
</reference>
<reference key="4">
    <citation type="journal article" date="1995" name="Proc. Natl. Acad. Sci. U.S.A.">
        <title>Probing the transmembrane topology of cyclic nucleotide-gated ion channels with a gene fusion approach.</title>
        <authorList>
            <person name="Henn D.K."/>
            <person name="Baumann A."/>
            <person name="Kaupp U.B."/>
        </authorList>
    </citation>
    <scope>TOPOLOGY</scope>
</reference>
<reference key="5">
    <citation type="journal article" date="1992" name="J. Biol. Chem.">
        <title>Antibodies against synthetic peptides used to determine the topology and site of glycosylation of the cGMP-gated channel from bovine rod photoreceptors.</title>
        <authorList>
            <person name="Wohlfart P."/>
            <person name="Haase W."/>
            <person name="Molday R.S."/>
            <person name="Cook N.J."/>
        </authorList>
    </citation>
    <scope>TOPOLOGY</scope>
    <scope>GLYCOSYLATION AT ASN-327</scope>
    <scope>TISSUE SPECIFICITY</scope>
    <scope>SUBCELLULAR LOCATION</scope>
</reference>
<reference key="6">
    <citation type="journal article" date="1999" name="J. Gen. Physiol.">
        <title>Divalent cation selectivity is a function of gating in native and recombinant cyclic nucleotide-gated ion channels from retinal photoreceptors.</title>
        <authorList>
            <person name="Hackos D.H."/>
            <person name="Korenbrot J.I."/>
        </authorList>
    </citation>
    <scope>FUNCTION</scope>
    <scope>TRANSPORTER ACTIVITY</scope>
</reference>
<reference key="7">
    <citation type="journal article" date="2015" name="Nat. Commun.">
        <title>Conformational rearrangements in the transmembrane domain of CNGA1 channels revealed by single-molecule force spectroscopy.</title>
        <authorList>
            <person name="Maity S."/>
            <person name="Mazzolini M."/>
            <person name="Arcangeletti M."/>
            <person name="Valbuena A."/>
            <person name="Fabris P."/>
            <person name="Lazzarino M."/>
            <person name="Torre V."/>
        </authorList>
    </citation>
    <scope>MUTAGENESIS OF PRO-293</scope>
    <scope>SUBCELLULAR LOCATION</scope>
</reference>
<reference key="8">
    <citation type="journal article" date="2011" name="Nat. Commun.">
        <title>Molecular mechanism for 3:1 subunit stoichiometry of rod cyclic nucleotide-gated ion channels.</title>
        <authorList>
            <person name="Shuart N.G."/>
            <person name="Haitin Y."/>
            <person name="Camp S.S."/>
            <person name="Black K.D."/>
            <person name="Zagotta W.N."/>
        </authorList>
    </citation>
    <scope>X-RAY CRYSTALLOGRAPHY (2.14 ANGSTROMS) OF 621-690</scope>
    <scope>COILED-COIL DOMAIN</scope>
    <scope>HOMOTETRAMERIZATION</scope>
    <scope>HETEROTETRAMERIZATION WITH CNGB1</scope>
    <scope>FUNCTION</scope>
</reference>
<reference key="9">
    <citation type="journal article" date="2022" name="Nat. Struct. Mol. Biol.">
        <title>The structure of the native CNGA1/CNGB1 CNG channel from bovine retinal rods.</title>
        <authorList>
            <person name="Barret D.C.A."/>
            <person name="Schertler G.F.X."/>
            <person name="Kaupp U.B."/>
            <person name="Marino J."/>
        </authorList>
    </citation>
    <scope>STRUCTURE BY ELECTRON MICROSCOPY (3.40 ANGSTROMS)</scope>
    <scope>SUBUNIT</scope>
    <scope>DOMAIN</scope>
    <scope>SITE</scope>
</reference>
<reference key="10">
    <citation type="journal article" date="2023" name="Proc. Natl. Acad. Sci. U.S.A.">
        <title>Structural basis of calmodulin modulation of the rod cyclic nucleotide-gated channel.</title>
        <authorList>
            <person name="Barret D.C.A."/>
            <person name="Schuster D."/>
            <person name="Rodrigues M.J."/>
            <person name="Leitner A."/>
            <person name="Picotti P."/>
            <person name="Schertler G.F.X."/>
            <person name="Kaupp U.B."/>
            <person name="Korkhov V.M."/>
            <person name="Marino J."/>
        </authorList>
    </citation>
    <scope>STRUCTURE BY ELECTRON MICROSCOPY (2.76 ANGSTROMS)</scope>
    <scope>SUBUNIT</scope>
    <scope>TOPOLOGY</scope>
    <scope>DOMAIN</scope>
</reference>
<sequence>MKKVIINTWHSFVNIPNVVGPDVEKEITRMENGACSSFSGDDDDSASMFEESETENPHARDSFRSNTHGSGQPSQREQYLPGAIALFNVNNSSNKEQEPKEKKKKKKEKKSKPDDKNENKKDPEKKKKKEKDKDKKKKEEKGKDKKEEEKKEVVVIDPSGNTYYNWLFCITLPVMYNWTMIIARACFDELQSDYLEYWLAFDYLSDVVYLLDMFVRTRTGYLEQGLLVKEERKLIDKYKSTFQFKLDVLSVIPTDLLYIKFGWNYPEIRLNRLLRISRMFEFFQRTETRTNYPNIFRISNLVMYIIIIIHWNACVYFSISKAIGFGNDTWVYPDVNDPDFGRLARKYVYSLYWSTLTLTTIGETPPPVRDSEYFFVVADFLIGVLIFATIVGNIGSMISNMNAARAEFQARIDAIKQYMHFRNVSKDMEKRVIKWFDYLWTNKKTVDEREVLKYLPDKLRAEIAINVHLDTLKKVRIFADCEAGLLVELVLKLQPQVYSPGDYICKKGDIGREMYIIKEGKLAVVADDGITQFVVLSDGSYFGEISILNIKGSKAGNRRTANIKSIGYSDLFCLSKDDLMEALTEYPDAKGMLEEKGKQILMKDGLLDINIANAGSDPKDLEEKVTRMESSVDLLQTRFARILAEYESMQQKLKQRLTKVEKFLKPLIDTEFSAIEGSGTESGPTDSTQD</sequence>
<comment type="function">
    <text evidence="3 5 6">Pore-forming subunit of the rod cyclic nucleotide-gated channel. Mediates rod photoresponses at dim light converting transient changes in intracellular cGMP levels into electrical signals. In the dark, cGMP levels are high and keep the channel open enabling a steady inward current carried by Na(+) and Ca(2+) ions that leads to membrane depolarization and neurotransmitter release from synaptic terminals. Upon photon absorption cGMP levels decline leading to channel closure and membrane hyperpolarization that ultimately slows neurotransmitter release and signals the presence of light, the end point of the phototransduction cascade. Conducts cGMP- and cAMP-gated ion currents, with permeability for monovalent and divalent cations. The selectivity for Ca(2+) over Na(+) increases with cGMP concentrations, whereas the selectivity among monovalent ions is independent of the cGMP levels.</text>
</comment>
<comment type="catalytic activity">
    <reaction evidence="3">
        <text>Ca(2+)(in) = Ca(2+)(out)</text>
        <dbReference type="Rhea" id="RHEA:29671"/>
        <dbReference type="ChEBI" id="CHEBI:29108"/>
    </reaction>
</comment>
<comment type="catalytic activity">
    <reaction evidence="3 6">
        <text>Na(+)(in) = Na(+)(out)</text>
        <dbReference type="Rhea" id="RHEA:34963"/>
        <dbReference type="ChEBI" id="CHEBI:29101"/>
    </reaction>
</comment>
<comment type="catalytic activity">
    <reaction evidence="6">
        <text>K(+)(in) = K(+)(out)</text>
        <dbReference type="Rhea" id="RHEA:29463"/>
        <dbReference type="ChEBI" id="CHEBI:29103"/>
    </reaction>
</comment>
<comment type="catalytic activity">
    <reaction evidence="3 6">
        <text>NH4(+)(in) = NH4(+)(out)</text>
        <dbReference type="Rhea" id="RHEA:28747"/>
        <dbReference type="ChEBI" id="CHEBI:28938"/>
    </reaction>
</comment>
<comment type="catalytic activity">
    <reaction evidence="6">
        <text>Rb(+)(in) = Rb(+)(out)</text>
        <dbReference type="Rhea" id="RHEA:78547"/>
        <dbReference type="ChEBI" id="CHEBI:49847"/>
    </reaction>
</comment>
<comment type="catalytic activity">
    <reaction evidence="6">
        <text>Li(+)(in) = Li(+)(out)</text>
        <dbReference type="Rhea" id="RHEA:78551"/>
        <dbReference type="ChEBI" id="CHEBI:49713"/>
    </reaction>
</comment>
<comment type="catalytic activity">
    <reaction evidence="3 6">
        <text>Cs(+)(in) = Cs(+)(out)</text>
        <dbReference type="Rhea" id="RHEA:78555"/>
        <dbReference type="ChEBI" id="CHEBI:49547"/>
    </reaction>
</comment>
<comment type="subunit">
    <text evidence="5 8 9">Forms a heterotetramer with CNGB1 in a 3:1 ratio (PubMed:21878911, PubMed:34969975). May also form cyclic nucleotide-activated homotetrameric channels, that are efficiently activated by saturating cGMP, but poorly activated by saturating cAMP compared to the heterotetramer with CNGB1 (PubMed:21878911). The channel binds Ca(2+)-bound CALM1 via CaM1 and CaM2 regions of the CNGB1 subunit; this interaction modulates the affinity of the channel for cNMPs in response to intracellular Ca(2+) levels.</text>
</comment>
<comment type="subcellular location">
    <subcellularLocation>
        <location evidence="4">Cell membrane</location>
        <topology evidence="4 7">Multi-pass membrane protein</topology>
    </subcellularLocation>
</comment>
<comment type="tissue specificity">
    <text evidence="4">Expressed in the retina, in rod cells (at protein level).</text>
</comment>
<comment type="domain">
    <text evidence="5">The C-terminal coiled-coil domain mediates homotrimerization of CNGA subunits.</text>
</comment>
<comment type="domain">
    <text evidence="8 9">The cyclic nucleotide-binding domain (CNBD) comprises three helices and a beta-roll of eight beta-strands from CNGA1 and CNGB1 subunits. Upon cNMP binding transmits the conformational changes to the C-linker domain of the S6 helix to open the ion conduction pathway.</text>
</comment>
<comment type="domain">
    <text evidence="8 9">The ion conduction pathway consists of S5, S6 and pore helices from CNGA1 and CNGB1 subunits. It contains a central hydrophobic gate that opens upon cNMP binding.</text>
</comment>
<comment type="similarity">
    <text evidence="12">Belongs to the cyclic nucleotide-gated cation channel (TC 1.A.1.5) family. CNGA1 subfamily.</text>
</comment>
<protein>
    <recommendedName>
        <fullName>Cyclic nucleotide-gated channel alpha-1</fullName>
        <shortName>CNG channel alpha-1</shortName>
        <shortName>CNG-1</shortName>
        <shortName evidence="10">CNG1</shortName>
    </recommendedName>
    <alternativeName>
        <fullName>Cyclic nucleotide-gated cation channel 1</fullName>
    </alternativeName>
    <alternativeName>
        <fullName>Cyclic nucleotide-gated channel, photoreceptor</fullName>
    </alternativeName>
    <alternativeName>
        <fullName evidence="1">Rod photoreceptor cGMP-gated cation channel subunit alpha</fullName>
    </alternativeName>
    <alternativeName>
        <fullName>cGMP-gated cation channel alpha-1</fullName>
    </alternativeName>
</protein>
<gene>
    <name evidence="11" type="primary">CNGA1</name>
    <name type="synonym">CNCG</name>
    <name type="synonym">CNCG1</name>
</gene>
<dbReference type="EMBL" id="X51604">
    <property type="protein sequence ID" value="CAA35947.1"/>
    <property type="molecule type" value="mRNA"/>
</dbReference>
<dbReference type="PIR" id="S07103">
    <property type="entry name" value="S07103"/>
</dbReference>
<dbReference type="RefSeq" id="NP_776703.1">
    <property type="nucleotide sequence ID" value="NM_174278.2"/>
</dbReference>
<dbReference type="PDB" id="3SWF">
    <property type="method" value="X-ray"/>
    <property type="resolution" value="2.14 A"/>
    <property type="chains" value="A/B/C=621-690"/>
</dbReference>
<dbReference type="PDB" id="7O4H">
    <property type="method" value="EM"/>
    <property type="resolution" value="3.40 A"/>
    <property type="chains" value="A/B/C=1-690"/>
</dbReference>
<dbReference type="PDB" id="8BX7">
    <property type="method" value="EM"/>
    <property type="resolution" value="2.76 A"/>
    <property type="chains" value="A/B/C=1-690"/>
</dbReference>
<dbReference type="PDBsum" id="3SWF"/>
<dbReference type="PDBsum" id="7O4H"/>
<dbReference type="PDBsum" id="8BX7"/>
<dbReference type="EMDB" id="EMD-12718"/>
<dbReference type="EMDB" id="EMD-16311"/>
<dbReference type="SMR" id="Q00194"/>
<dbReference type="FunCoup" id="Q00194">
    <property type="interactions" value="58"/>
</dbReference>
<dbReference type="IntAct" id="Q00194">
    <property type="interactions" value="1"/>
</dbReference>
<dbReference type="MINT" id="Q00194"/>
<dbReference type="STRING" id="9913.ENSBTAP00000002853"/>
<dbReference type="BindingDB" id="Q00194"/>
<dbReference type="ChEMBL" id="CHEMBL4907"/>
<dbReference type="DrugCentral" id="Q00194"/>
<dbReference type="GlyCosmos" id="Q00194">
    <property type="glycosylation" value="1 site, No reported glycans"/>
</dbReference>
<dbReference type="GlyGen" id="Q00194">
    <property type="glycosylation" value="1 site"/>
</dbReference>
<dbReference type="iPTMnet" id="Q00194"/>
<dbReference type="PaxDb" id="9913-ENSBTAP00000002853"/>
<dbReference type="Ensembl" id="ENSBTAT00000002853.7">
    <property type="protein sequence ID" value="ENSBTAP00000002853.5"/>
    <property type="gene ID" value="ENSBTAG00000002205.7"/>
</dbReference>
<dbReference type="GeneID" id="281700"/>
<dbReference type="KEGG" id="bta:281700"/>
<dbReference type="CTD" id="1259"/>
<dbReference type="VEuPathDB" id="HostDB:ENSBTAG00000002205"/>
<dbReference type="VGNC" id="VGNC:27497">
    <property type="gene designation" value="CNGA1"/>
</dbReference>
<dbReference type="eggNOG" id="KOG0500">
    <property type="taxonomic scope" value="Eukaryota"/>
</dbReference>
<dbReference type="GeneTree" id="ENSGT00940000156074"/>
<dbReference type="HOGENOM" id="CLU_005746_12_0_1"/>
<dbReference type="InParanoid" id="Q00194"/>
<dbReference type="OMA" id="ECEPQTR"/>
<dbReference type="OrthoDB" id="421226at2759"/>
<dbReference type="TreeFam" id="TF319048"/>
<dbReference type="Reactome" id="R-BTA-2485179">
    <property type="pathway name" value="Activation of the phototransduction cascade"/>
</dbReference>
<dbReference type="Reactome" id="R-BTA-2514859">
    <property type="pathway name" value="Inactivation, recovery and regulation of the phototransduction cascade"/>
</dbReference>
<dbReference type="EvolutionaryTrace" id="Q00194"/>
<dbReference type="PRO" id="PR:Q00194"/>
<dbReference type="Proteomes" id="UP000009136">
    <property type="component" value="Chromosome 6"/>
</dbReference>
<dbReference type="Bgee" id="ENSBTAG00000002205">
    <property type="expression patterns" value="Expressed in retina and 22 other cell types or tissues"/>
</dbReference>
<dbReference type="GO" id="GO:0017071">
    <property type="term" value="C:intracellular cyclic nucleotide activated cation channel complex"/>
    <property type="evidence" value="ECO:0000318"/>
    <property type="project" value="GO_Central"/>
</dbReference>
<dbReference type="GO" id="GO:0001750">
    <property type="term" value="C:photoreceptor outer segment"/>
    <property type="evidence" value="ECO:0000250"/>
    <property type="project" value="AgBase"/>
</dbReference>
<dbReference type="GO" id="GO:0005886">
    <property type="term" value="C:plasma membrane"/>
    <property type="evidence" value="ECO:0000318"/>
    <property type="project" value="GO_Central"/>
</dbReference>
<dbReference type="GO" id="GO:0120200">
    <property type="term" value="C:rod photoreceptor outer segment"/>
    <property type="evidence" value="ECO:0000250"/>
    <property type="project" value="UniProtKB"/>
</dbReference>
<dbReference type="GO" id="GO:1902495">
    <property type="term" value="C:transmembrane transporter complex"/>
    <property type="evidence" value="ECO:0000314"/>
    <property type="project" value="UniProtKB"/>
</dbReference>
<dbReference type="GO" id="GO:0005262">
    <property type="term" value="F:calcium channel activity"/>
    <property type="evidence" value="ECO:0007669"/>
    <property type="project" value="UniProtKB-KW"/>
</dbReference>
<dbReference type="GO" id="GO:0030552">
    <property type="term" value="F:cAMP binding"/>
    <property type="evidence" value="ECO:0000250"/>
    <property type="project" value="UniProtKB"/>
</dbReference>
<dbReference type="GO" id="GO:0030553">
    <property type="term" value="F:cGMP binding"/>
    <property type="evidence" value="ECO:0000315"/>
    <property type="project" value="UniProtKB"/>
</dbReference>
<dbReference type="GO" id="GO:0005222">
    <property type="term" value="F:intracellularly cAMP-activated cation channel activity"/>
    <property type="evidence" value="ECO:0000250"/>
    <property type="project" value="UniProtKB"/>
</dbReference>
<dbReference type="GO" id="GO:0005223">
    <property type="term" value="F:intracellularly cGMP-activated cation channel activity"/>
    <property type="evidence" value="ECO:0000314"/>
    <property type="project" value="UniProtKB"/>
</dbReference>
<dbReference type="GO" id="GO:0044877">
    <property type="term" value="F:protein-containing complex binding"/>
    <property type="evidence" value="ECO:0000318"/>
    <property type="project" value="GO_Central"/>
</dbReference>
<dbReference type="GO" id="GO:0005272">
    <property type="term" value="F:sodium channel activity"/>
    <property type="evidence" value="ECO:0007669"/>
    <property type="project" value="UniProtKB-KW"/>
</dbReference>
<dbReference type="GO" id="GO:0006816">
    <property type="term" value="P:calcium ion transport"/>
    <property type="evidence" value="ECO:0000314"/>
    <property type="project" value="UniProtKB"/>
</dbReference>
<dbReference type="GO" id="GO:0098655">
    <property type="term" value="P:monoatomic cation transmembrane transport"/>
    <property type="evidence" value="ECO:0000318"/>
    <property type="project" value="GO_Central"/>
</dbReference>
<dbReference type="GO" id="GO:0006812">
    <property type="term" value="P:monoatomic cation transport"/>
    <property type="evidence" value="ECO:0000315"/>
    <property type="project" value="UniProtKB"/>
</dbReference>
<dbReference type="GO" id="GO:0006814">
    <property type="term" value="P:sodium ion transport"/>
    <property type="evidence" value="ECO:0000314"/>
    <property type="project" value="UniProtKB"/>
</dbReference>
<dbReference type="GO" id="GO:0007601">
    <property type="term" value="P:visual perception"/>
    <property type="evidence" value="ECO:0007669"/>
    <property type="project" value="UniProtKB-KW"/>
</dbReference>
<dbReference type="CDD" id="cd00038">
    <property type="entry name" value="CAP_ED"/>
    <property type="match status" value="1"/>
</dbReference>
<dbReference type="FunFam" id="1.20.5.170:FF:000069">
    <property type="entry name" value="cGMP-gated cation channel alpha-1"/>
    <property type="match status" value="1"/>
</dbReference>
<dbReference type="FunFam" id="2.60.120.10:FF:000002">
    <property type="entry name" value="Cyclic nucleotide gated channel alpha 1a"/>
    <property type="match status" value="1"/>
</dbReference>
<dbReference type="FunFam" id="1.10.287.630:FF:000001">
    <property type="entry name" value="Cyclic nucleotide-gated channel alpha 3"/>
    <property type="match status" value="1"/>
</dbReference>
<dbReference type="FunFam" id="1.10.287.70:FF:000030">
    <property type="entry name" value="Cyclic nucleotide-gated channel alpha 3"/>
    <property type="match status" value="1"/>
</dbReference>
<dbReference type="FunFam" id="1.20.5.300:FF:000002">
    <property type="entry name" value="Cyclic nucleotide-gated channel alpha 3"/>
    <property type="match status" value="1"/>
</dbReference>
<dbReference type="Gene3D" id="1.10.287.70">
    <property type="match status" value="1"/>
</dbReference>
<dbReference type="Gene3D" id="1.20.5.170">
    <property type="match status" value="1"/>
</dbReference>
<dbReference type="Gene3D" id="1.10.287.630">
    <property type="entry name" value="Helix hairpin bin"/>
    <property type="match status" value="1"/>
</dbReference>
<dbReference type="Gene3D" id="2.60.120.10">
    <property type="entry name" value="Jelly Rolls"/>
    <property type="match status" value="1"/>
</dbReference>
<dbReference type="InterPro" id="IPR032406">
    <property type="entry name" value="CLZ_dom"/>
</dbReference>
<dbReference type="InterPro" id="IPR050866">
    <property type="entry name" value="CNG_cation_channel"/>
</dbReference>
<dbReference type="InterPro" id="IPR018488">
    <property type="entry name" value="cNMP-bd_CS"/>
</dbReference>
<dbReference type="InterPro" id="IPR000595">
    <property type="entry name" value="cNMP-bd_dom"/>
</dbReference>
<dbReference type="InterPro" id="IPR018490">
    <property type="entry name" value="cNMP-bd_dom_sf"/>
</dbReference>
<dbReference type="InterPro" id="IPR005821">
    <property type="entry name" value="Ion_trans_dom"/>
</dbReference>
<dbReference type="InterPro" id="IPR014710">
    <property type="entry name" value="RmlC-like_jellyroll"/>
</dbReference>
<dbReference type="PANTHER" id="PTHR45638">
    <property type="entry name" value="CYCLIC NUCLEOTIDE-GATED CATION CHANNEL SUBUNIT A"/>
    <property type="match status" value="1"/>
</dbReference>
<dbReference type="PANTHER" id="PTHR45638:SF9">
    <property type="entry name" value="CYCLIC NUCLEOTIDE-GATED CHANNEL ROD PHOTORECEPTOR SUBUNIT ALPHA"/>
    <property type="match status" value="1"/>
</dbReference>
<dbReference type="Pfam" id="PF16526">
    <property type="entry name" value="CLZ"/>
    <property type="match status" value="1"/>
</dbReference>
<dbReference type="Pfam" id="PF00027">
    <property type="entry name" value="cNMP_binding"/>
    <property type="match status" value="1"/>
</dbReference>
<dbReference type="Pfam" id="PF00520">
    <property type="entry name" value="Ion_trans"/>
    <property type="match status" value="1"/>
</dbReference>
<dbReference type="SMART" id="SM00100">
    <property type="entry name" value="cNMP"/>
    <property type="match status" value="1"/>
</dbReference>
<dbReference type="SUPFAM" id="SSF51206">
    <property type="entry name" value="cAMP-binding domain-like"/>
    <property type="match status" value="1"/>
</dbReference>
<dbReference type="SUPFAM" id="SSF81324">
    <property type="entry name" value="Voltage-gated potassium channels"/>
    <property type="match status" value="1"/>
</dbReference>
<dbReference type="PROSITE" id="PS00888">
    <property type="entry name" value="CNMP_BINDING_1"/>
    <property type="match status" value="1"/>
</dbReference>
<dbReference type="PROSITE" id="PS00889">
    <property type="entry name" value="CNMP_BINDING_2"/>
    <property type="match status" value="1"/>
</dbReference>
<dbReference type="PROSITE" id="PS50042">
    <property type="entry name" value="CNMP_BINDING_3"/>
    <property type="match status" value="1"/>
</dbReference>